<gene>
    <name evidence="1" type="primary">rpsG</name>
    <name type="ordered locus">PSPA7_0833</name>
</gene>
<comment type="function">
    <text evidence="1">One of the primary rRNA binding proteins, it binds directly to 16S rRNA where it nucleates assembly of the head domain of the 30S subunit. Is located at the subunit interface close to the decoding center, probably blocks exit of the E-site tRNA.</text>
</comment>
<comment type="subunit">
    <text evidence="1">Part of the 30S ribosomal subunit. Contacts proteins S9 and S11.</text>
</comment>
<comment type="similarity">
    <text evidence="1">Belongs to the universal ribosomal protein uS7 family.</text>
</comment>
<protein>
    <recommendedName>
        <fullName evidence="1">Small ribosomal subunit protein uS7</fullName>
    </recommendedName>
    <alternativeName>
        <fullName evidence="2">30S ribosomal protein S7</fullName>
    </alternativeName>
</protein>
<sequence>MPRRRVAAKREVLADPKYGSQILAKFMNHVMESGKKAVAERIVYGALDKVKERGKADPLETFEKALDAIAPLVEVKSRRVGGATYQVPVEVRPSRRNALAMRWLVDFARKRGEKSMALRLAGELLDAAEGKGAAVKKREDVHRMAEANKAFSHYRF</sequence>
<feature type="chain" id="PRO_1000014260" description="Small ribosomal subunit protein uS7">
    <location>
        <begin position="1"/>
        <end position="156"/>
    </location>
</feature>
<organism>
    <name type="scientific">Pseudomonas paraeruginosa (strain DSM 24068 / PA7)</name>
    <name type="common">Pseudomonas aeruginosa (strain PA7)</name>
    <dbReference type="NCBI Taxonomy" id="381754"/>
    <lineage>
        <taxon>Bacteria</taxon>
        <taxon>Pseudomonadati</taxon>
        <taxon>Pseudomonadota</taxon>
        <taxon>Gammaproteobacteria</taxon>
        <taxon>Pseudomonadales</taxon>
        <taxon>Pseudomonadaceae</taxon>
        <taxon>Pseudomonas</taxon>
        <taxon>Pseudomonas paraeruginosa</taxon>
    </lineage>
</organism>
<proteinExistence type="inferred from homology"/>
<evidence type="ECO:0000255" key="1">
    <source>
        <dbReference type="HAMAP-Rule" id="MF_00480"/>
    </source>
</evidence>
<evidence type="ECO:0000305" key="2"/>
<name>RS7_PSEP7</name>
<keyword id="KW-0687">Ribonucleoprotein</keyword>
<keyword id="KW-0689">Ribosomal protein</keyword>
<keyword id="KW-0694">RNA-binding</keyword>
<keyword id="KW-0699">rRNA-binding</keyword>
<keyword id="KW-0820">tRNA-binding</keyword>
<accession>A6UZI4</accession>
<reference key="1">
    <citation type="submission" date="2007-06" db="EMBL/GenBank/DDBJ databases">
        <authorList>
            <person name="Dodson R.J."/>
            <person name="Harkins D."/>
            <person name="Paulsen I.T."/>
        </authorList>
    </citation>
    <scope>NUCLEOTIDE SEQUENCE [LARGE SCALE GENOMIC DNA]</scope>
    <source>
        <strain>DSM 24068 / PA7</strain>
    </source>
</reference>
<dbReference type="EMBL" id="CP000744">
    <property type="protein sequence ID" value="ABR86764.1"/>
    <property type="molecule type" value="Genomic_DNA"/>
</dbReference>
<dbReference type="RefSeq" id="WP_003093742.1">
    <property type="nucleotide sequence ID" value="NC_009656.1"/>
</dbReference>
<dbReference type="SMR" id="A6UZI4"/>
<dbReference type="GeneID" id="77219194"/>
<dbReference type="KEGG" id="pap:PSPA7_0833"/>
<dbReference type="HOGENOM" id="CLU_072226_1_1_6"/>
<dbReference type="Proteomes" id="UP000001582">
    <property type="component" value="Chromosome"/>
</dbReference>
<dbReference type="GO" id="GO:0015935">
    <property type="term" value="C:small ribosomal subunit"/>
    <property type="evidence" value="ECO:0007669"/>
    <property type="project" value="InterPro"/>
</dbReference>
<dbReference type="GO" id="GO:0019843">
    <property type="term" value="F:rRNA binding"/>
    <property type="evidence" value="ECO:0007669"/>
    <property type="project" value="UniProtKB-UniRule"/>
</dbReference>
<dbReference type="GO" id="GO:0003735">
    <property type="term" value="F:structural constituent of ribosome"/>
    <property type="evidence" value="ECO:0007669"/>
    <property type="project" value="InterPro"/>
</dbReference>
<dbReference type="GO" id="GO:0000049">
    <property type="term" value="F:tRNA binding"/>
    <property type="evidence" value="ECO:0007669"/>
    <property type="project" value="UniProtKB-UniRule"/>
</dbReference>
<dbReference type="GO" id="GO:0006412">
    <property type="term" value="P:translation"/>
    <property type="evidence" value="ECO:0007669"/>
    <property type="project" value="UniProtKB-UniRule"/>
</dbReference>
<dbReference type="CDD" id="cd14869">
    <property type="entry name" value="uS7_Bacteria"/>
    <property type="match status" value="1"/>
</dbReference>
<dbReference type="FunFam" id="1.10.455.10:FF:000001">
    <property type="entry name" value="30S ribosomal protein S7"/>
    <property type="match status" value="1"/>
</dbReference>
<dbReference type="Gene3D" id="1.10.455.10">
    <property type="entry name" value="Ribosomal protein S7 domain"/>
    <property type="match status" value="1"/>
</dbReference>
<dbReference type="HAMAP" id="MF_00480_B">
    <property type="entry name" value="Ribosomal_uS7_B"/>
    <property type="match status" value="1"/>
</dbReference>
<dbReference type="InterPro" id="IPR000235">
    <property type="entry name" value="Ribosomal_uS7"/>
</dbReference>
<dbReference type="InterPro" id="IPR005717">
    <property type="entry name" value="Ribosomal_uS7_bac/org-type"/>
</dbReference>
<dbReference type="InterPro" id="IPR020606">
    <property type="entry name" value="Ribosomal_uS7_CS"/>
</dbReference>
<dbReference type="InterPro" id="IPR023798">
    <property type="entry name" value="Ribosomal_uS7_dom"/>
</dbReference>
<dbReference type="InterPro" id="IPR036823">
    <property type="entry name" value="Ribosomal_uS7_dom_sf"/>
</dbReference>
<dbReference type="NCBIfam" id="TIGR01029">
    <property type="entry name" value="rpsG_bact"/>
    <property type="match status" value="1"/>
</dbReference>
<dbReference type="PANTHER" id="PTHR11205">
    <property type="entry name" value="RIBOSOMAL PROTEIN S7"/>
    <property type="match status" value="1"/>
</dbReference>
<dbReference type="Pfam" id="PF00177">
    <property type="entry name" value="Ribosomal_S7"/>
    <property type="match status" value="1"/>
</dbReference>
<dbReference type="PIRSF" id="PIRSF002122">
    <property type="entry name" value="RPS7p_RPS7a_RPS5e_RPS7o"/>
    <property type="match status" value="1"/>
</dbReference>
<dbReference type="SUPFAM" id="SSF47973">
    <property type="entry name" value="Ribosomal protein S7"/>
    <property type="match status" value="1"/>
</dbReference>
<dbReference type="PROSITE" id="PS00052">
    <property type="entry name" value="RIBOSOMAL_S7"/>
    <property type="match status" value="1"/>
</dbReference>